<feature type="chain" id="PRO_0000139891" description="Ribonuclease PH">
    <location>
        <begin position="1"/>
        <end position="238"/>
    </location>
</feature>
<feature type="binding site" evidence="1">
    <location>
        <position position="86"/>
    </location>
    <ligand>
        <name>phosphate</name>
        <dbReference type="ChEBI" id="CHEBI:43474"/>
        <note>substrate</note>
    </ligand>
</feature>
<feature type="binding site" evidence="1">
    <location>
        <begin position="124"/>
        <end position="126"/>
    </location>
    <ligand>
        <name>phosphate</name>
        <dbReference type="ChEBI" id="CHEBI:43474"/>
        <note>substrate</note>
    </ligand>
</feature>
<dbReference type="EC" id="2.7.7.56" evidence="1"/>
<dbReference type="EMBL" id="AE005174">
    <property type="protein sequence ID" value="AAG58787.1"/>
    <property type="molecule type" value="Genomic_DNA"/>
</dbReference>
<dbReference type="EMBL" id="BA000007">
    <property type="protein sequence ID" value="BAB37941.1"/>
    <property type="molecule type" value="Genomic_DNA"/>
</dbReference>
<dbReference type="PIR" id="F91193">
    <property type="entry name" value="F91193"/>
</dbReference>
<dbReference type="PIR" id="G86040">
    <property type="entry name" value="G86040"/>
</dbReference>
<dbReference type="RefSeq" id="NP_312545.1">
    <property type="nucleotide sequence ID" value="NC_002695.1"/>
</dbReference>
<dbReference type="RefSeq" id="WP_001247093.1">
    <property type="nucleotide sequence ID" value="NZ_VOAI01000021.1"/>
</dbReference>
<dbReference type="SMR" id="P66680"/>
<dbReference type="STRING" id="155864.Z5068"/>
<dbReference type="GeneID" id="915527"/>
<dbReference type="GeneID" id="93778358"/>
<dbReference type="KEGG" id="ece:Z5068"/>
<dbReference type="KEGG" id="ecs:ECs_4518"/>
<dbReference type="PATRIC" id="fig|386585.9.peg.4734"/>
<dbReference type="eggNOG" id="COG0689">
    <property type="taxonomic scope" value="Bacteria"/>
</dbReference>
<dbReference type="HOGENOM" id="CLU_050858_0_0_6"/>
<dbReference type="OMA" id="RYNMAPF"/>
<dbReference type="Proteomes" id="UP000000558">
    <property type="component" value="Chromosome"/>
</dbReference>
<dbReference type="Proteomes" id="UP000002519">
    <property type="component" value="Chromosome"/>
</dbReference>
<dbReference type="GO" id="GO:0000175">
    <property type="term" value="F:3'-5'-RNA exonuclease activity"/>
    <property type="evidence" value="ECO:0007669"/>
    <property type="project" value="UniProtKB-UniRule"/>
</dbReference>
<dbReference type="GO" id="GO:0000049">
    <property type="term" value="F:tRNA binding"/>
    <property type="evidence" value="ECO:0007669"/>
    <property type="project" value="UniProtKB-UniRule"/>
</dbReference>
<dbReference type="GO" id="GO:0009022">
    <property type="term" value="F:tRNA nucleotidyltransferase activity"/>
    <property type="evidence" value="ECO:0007669"/>
    <property type="project" value="UniProtKB-UniRule"/>
</dbReference>
<dbReference type="GO" id="GO:0016075">
    <property type="term" value="P:rRNA catabolic process"/>
    <property type="evidence" value="ECO:0007669"/>
    <property type="project" value="UniProtKB-UniRule"/>
</dbReference>
<dbReference type="GO" id="GO:0006364">
    <property type="term" value="P:rRNA processing"/>
    <property type="evidence" value="ECO:0007669"/>
    <property type="project" value="UniProtKB-KW"/>
</dbReference>
<dbReference type="GO" id="GO:0008033">
    <property type="term" value="P:tRNA processing"/>
    <property type="evidence" value="ECO:0007669"/>
    <property type="project" value="UniProtKB-UniRule"/>
</dbReference>
<dbReference type="CDD" id="cd11362">
    <property type="entry name" value="RNase_PH_bact"/>
    <property type="match status" value="1"/>
</dbReference>
<dbReference type="FunFam" id="3.30.230.70:FF:000003">
    <property type="entry name" value="Ribonuclease PH"/>
    <property type="match status" value="1"/>
</dbReference>
<dbReference type="Gene3D" id="3.30.230.70">
    <property type="entry name" value="GHMP Kinase, N-terminal domain"/>
    <property type="match status" value="1"/>
</dbReference>
<dbReference type="HAMAP" id="MF_00564">
    <property type="entry name" value="RNase_PH"/>
    <property type="match status" value="1"/>
</dbReference>
<dbReference type="InterPro" id="IPR001247">
    <property type="entry name" value="ExoRNase_PH_dom1"/>
</dbReference>
<dbReference type="InterPro" id="IPR015847">
    <property type="entry name" value="ExoRNase_PH_dom2"/>
</dbReference>
<dbReference type="InterPro" id="IPR036345">
    <property type="entry name" value="ExoRNase_PH_dom2_sf"/>
</dbReference>
<dbReference type="InterPro" id="IPR027408">
    <property type="entry name" value="PNPase/RNase_PH_dom_sf"/>
</dbReference>
<dbReference type="InterPro" id="IPR020568">
    <property type="entry name" value="Ribosomal_Su5_D2-typ_SF"/>
</dbReference>
<dbReference type="InterPro" id="IPR050080">
    <property type="entry name" value="RNase_PH"/>
</dbReference>
<dbReference type="InterPro" id="IPR002381">
    <property type="entry name" value="RNase_PH_bac-type"/>
</dbReference>
<dbReference type="InterPro" id="IPR018336">
    <property type="entry name" value="RNase_PH_CS"/>
</dbReference>
<dbReference type="NCBIfam" id="TIGR01966">
    <property type="entry name" value="RNasePH"/>
    <property type="match status" value="1"/>
</dbReference>
<dbReference type="PANTHER" id="PTHR11953">
    <property type="entry name" value="EXOSOME COMPLEX COMPONENT"/>
    <property type="match status" value="1"/>
</dbReference>
<dbReference type="PANTHER" id="PTHR11953:SF0">
    <property type="entry name" value="EXOSOME COMPLEX COMPONENT RRP41"/>
    <property type="match status" value="1"/>
</dbReference>
<dbReference type="Pfam" id="PF01138">
    <property type="entry name" value="RNase_PH"/>
    <property type="match status" value="1"/>
</dbReference>
<dbReference type="Pfam" id="PF03725">
    <property type="entry name" value="RNase_PH_C"/>
    <property type="match status" value="1"/>
</dbReference>
<dbReference type="SUPFAM" id="SSF55666">
    <property type="entry name" value="Ribonuclease PH domain 2-like"/>
    <property type="match status" value="1"/>
</dbReference>
<dbReference type="SUPFAM" id="SSF54211">
    <property type="entry name" value="Ribosomal protein S5 domain 2-like"/>
    <property type="match status" value="1"/>
</dbReference>
<dbReference type="PROSITE" id="PS01277">
    <property type="entry name" value="RIBONUCLEASE_PH"/>
    <property type="match status" value="1"/>
</dbReference>
<comment type="function">
    <text evidence="1">Phosphorolytic 3'-5' exoribonuclease that plays an important role in tRNA 3'-end maturation. Removes nucleotide residues following the 3'-CCA terminus of tRNAs; can also add nucleotides to the ends of RNA molecules by using nucleoside diphosphates as substrates, but this may not be physiologically important. Probably plays a role in initiation of 16S rRNA degradation (leading to ribosome degradation) during starvation.</text>
</comment>
<comment type="catalytic activity">
    <reaction evidence="1">
        <text>tRNA(n+1) + phosphate = tRNA(n) + a ribonucleoside 5'-diphosphate</text>
        <dbReference type="Rhea" id="RHEA:10628"/>
        <dbReference type="Rhea" id="RHEA-COMP:17343"/>
        <dbReference type="Rhea" id="RHEA-COMP:17344"/>
        <dbReference type="ChEBI" id="CHEBI:43474"/>
        <dbReference type="ChEBI" id="CHEBI:57930"/>
        <dbReference type="ChEBI" id="CHEBI:173114"/>
        <dbReference type="EC" id="2.7.7.56"/>
    </reaction>
</comment>
<comment type="subunit">
    <text evidence="1">Homohexameric ring arranged as a trimer of dimers.</text>
</comment>
<comment type="similarity">
    <text evidence="1">Belongs to the RNase PH family.</text>
</comment>
<sequence>MRPAGRSNNQVRPVTLTRNYTKHAEGSVLVEFGDTKVLCTASIEEGVPRFLKGQGQGWITAEYGMLPRSTHTRNAREAAKGKQGGRTMEIQRLIARALRAAVDLKALGEFTITLDCDVLQADGGTRTASITGACVALADALQKLVENGKLKTNPMKGMVAAVSVGIVNGEAVCDLEYVEDSAAETDMNVVMTEDGRIIEVQGTAEGEPFTHEELLTLLALARGGIESIVATQKAALAN</sequence>
<keyword id="KW-0548">Nucleotidyltransferase</keyword>
<keyword id="KW-1185">Reference proteome</keyword>
<keyword id="KW-0694">RNA-binding</keyword>
<keyword id="KW-0698">rRNA processing</keyword>
<keyword id="KW-0808">Transferase</keyword>
<keyword id="KW-0819">tRNA processing</keyword>
<keyword id="KW-0820">tRNA-binding</keyword>
<organism>
    <name type="scientific">Escherichia coli O157:H7</name>
    <dbReference type="NCBI Taxonomy" id="83334"/>
    <lineage>
        <taxon>Bacteria</taxon>
        <taxon>Pseudomonadati</taxon>
        <taxon>Pseudomonadota</taxon>
        <taxon>Gammaproteobacteria</taxon>
        <taxon>Enterobacterales</taxon>
        <taxon>Enterobacteriaceae</taxon>
        <taxon>Escherichia</taxon>
    </lineage>
</organism>
<proteinExistence type="inferred from homology"/>
<protein>
    <recommendedName>
        <fullName evidence="1">Ribonuclease PH</fullName>
        <shortName evidence="1">RNase PH</shortName>
        <ecNumber evidence="1">2.7.7.56</ecNumber>
    </recommendedName>
    <alternativeName>
        <fullName evidence="1">tRNA nucleotidyltransferase</fullName>
    </alternativeName>
</protein>
<accession>P66680</accession>
<accession>Q8XD98</accession>
<reference key="1">
    <citation type="journal article" date="2001" name="Nature">
        <title>Genome sequence of enterohaemorrhagic Escherichia coli O157:H7.</title>
        <authorList>
            <person name="Perna N.T."/>
            <person name="Plunkett G. III"/>
            <person name="Burland V."/>
            <person name="Mau B."/>
            <person name="Glasner J.D."/>
            <person name="Rose D.J."/>
            <person name="Mayhew G.F."/>
            <person name="Evans P.S."/>
            <person name="Gregor J."/>
            <person name="Kirkpatrick H.A."/>
            <person name="Posfai G."/>
            <person name="Hackett J."/>
            <person name="Klink S."/>
            <person name="Boutin A."/>
            <person name="Shao Y."/>
            <person name="Miller L."/>
            <person name="Grotbeck E.J."/>
            <person name="Davis N.W."/>
            <person name="Lim A."/>
            <person name="Dimalanta E.T."/>
            <person name="Potamousis K."/>
            <person name="Apodaca J."/>
            <person name="Anantharaman T.S."/>
            <person name="Lin J."/>
            <person name="Yen G."/>
            <person name="Schwartz D.C."/>
            <person name="Welch R.A."/>
            <person name="Blattner F.R."/>
        </authorList>
    </citation>
    <scope>NUCLEOTIDE SEQUENCE [LARGE SCALE GENOMIC DNA]</scope>
    <source>
        <strain>O157:H7 / EDL933 / ATCC 700927 / EHEC</strain>
    </source>
</reference>
<reference key="2">
    <citation type="journal article" date="2001" name="DNA Res.">
        <title>Complete genome sequence of enterohemorrhagic Escherichia coli O157:H7 and genomic comparison with a laboratory strain K-12.</title>
        <authorList>
            <person name="Hayashi T."/>
            <person name="Makino K."/>
            <person name="Ohnishi M."/>
            <person name="Kurokawa K."/>
            <person name="Ishii K."/>
            <person name="Yokoyama K."/>
            <person name="Han C.-G."/>
            <person name="Ohtsubo E."/>
            <person name="Nakayama K."/>
            <person name="Murata T."/>
            <person name="Tanaka M."/>
            <person name="Tobe T."/>
            <person name="Iida T."/>
            <person name="Takami H."/>
            <person name="Honda T."/>
            <person name="Sasakawa C."/>
            <person name="Ogasawara N."/>
            <person name="Yasunaga T."/>
            <person name="Kuhara S."/>
            <person name="Shiba T."/>
            <person name="Hattori M."/>
            <person name="Shinagawa H."/>
        </authorList>
    </citation>
    <scope>NUCLEOTIDE SEQUENCE [LARGE SCALE GENOMIC DNA]</scope>
    <source>
        <strain>O157:H7 / Sakai / RIMD 0509952 / EHEC</strain>
    </source>
</reference>
<name>RNPH_ECO57</name>
<evidence type="ECO:0000255" key="1">
    <source>
        <dbReference type="HAMAP-Rule" id="MF_00564"/>
    </source>
</evidence>
<gene>
    <name evidence="1" type="primary">rph</name>
    <name type="ordered locus">Z5068</name>
    <name type="ordered locus">ECs4518</name>
</gene>